<protein>
    <recommendedName>
        <fullName>Uncharacterized protein MJECL37</fullName>
    </recommendedName>
</protein>
<gene>
    <name type="ordered locus">MJECL37</name>
</gene>
<organism>
    <name type="scientific">Methanocaldococcus jannaschii (strain ATCC 43067 / DSM 2661 / JAL-1 / JCM 10045 / NBRC 100440)</name>
    <name type="common">Methanococcus jannaschii</name>
    <dbReference type="NCBI Taxonomy" id="243232"/>
    <lineage>
        <taxon>Archaea</taxon>
        <taxon>Methanobacteriati</taxon>
        <taxon>Methanobacteriota</taxon>
        <taxon>Methanomada group</taxon>
        <taxon>Methanococci</taxon>
        <taxon>Methanococcales</taxon>
        <taxon>Methanocaldococcaceae</taxon>
        <taxon>Methanocaldococcus</taxon>
    </lineage>
</organism>
<reference key="1">
    <citation type="journal article" date="1996" name="Science">
        <title>Complete genome sequence of the methanogenic archaeon, Methanococcus jannaschii.</title>
        <authorList>
            <person name="Bult C.J."/>
            <person name="White O."/>
            <person name="Olsen G.J."/>
            <person name="Zhou L."/>
            <person name="Fleischmann R.D."/>
            <person name="Sutton G.G."/>
            <person name="Blake J.A."/>
            <person name="FitzGerald L.M."/>
            <person name="Clayton R.A."/>
            <person name="Gocayne J.D."/>
            <person name="Kerlavage A.R."/>
            <person name="Dougherty B.A."/>
            <person name="Tomb J.-F."/>
            <person name="Adams M.D."/>
            <person name="Reich C.I."/>
            <person name="Overbeek R."/>
            <person name="Kirkness E.F."/>
            <person name="Weinstock K.G."/>
            <person name="Merrick J.M."/>
            <person name="Glodek A."/>
            <person name="Scott J.L."/>
            <person name="Geoghagen N.S.M."/>
            <person name="Weidman J.F."/>
            <person name="Fuhrmann J.L."/>
            <person name="Nguyen D."/>
            <person name="Utterback T.R."/>
            <person name="Kelley J.M."/>
            <person name="Peterson J.D."/>
            <person name="Sadow P.W."/>
            <person name="Hanna M.C."/>
            <person name="Cotton M.D."/>
            <person name="Roberts K.M."/>
            <person name="Hurst M.A."/>
            <person name="Kaine B.P."/>
            <person name="Borodovsky M."/>
            <person name="Klenk H.-P."/>
            <person name="Fraser C.M."/>
            <person name="Smith H.O."/>
            <person name="Woese C.R."/>
            <person name="Venter J.C."/>
        </authorList>
    </citation>
    <scope>NUCLEOTIDE SEQUENCE [LARGE SCALE GENOMIC DNA]</scope>
    <source>
        <strain>ATCC 43067 / DSM 2661 / JAL-1 / JCM 10045 / NBRC 100440</strain>
    </source>
</reference>
<sequence>MNNFSKNLEECFQKYGYENFTLLLAGYIAKYPKYEEISNNTKFLNEYHNEVSNITTCLHVYKNLAEGVKRDFNLDLLYLNDYEIKKVKSMVEPNVISDAITVVTLVNDYNNLIDAARNVKKGDKESYTKFYIALGIVVFDVILIKENVAYKVSYKLVGILISKTGFYKVIYKYGGSTALKPIESCTHWISRGEINSMPSKLYNNSDKLTNISIKINTSKLYNKSINTIRSKIMEVSS</sequence>
<feature type="chain" id="PRO_0000107520" description="Uncharacterized protein MJECL37">
    <location>
        <begin position="1"/>
        <end position="237"/>
    </location>
</feature>
<name>Y3537_METJA</name>
<proteinExistence type="predicted"/>
<dbReference type="EMBL" id="L77118">
    <property type="protein sequence ID" value="AAC37106.1"/>
    <property type="molecule type" value="Genomic_DNA"/>
</dbReference>
<dbReference type="PIR" id="D64514">
    <property type="entry name" value="D64514"/>
</dbReference>
<dbReference type="RefSeq" id="WP_010890084.1">
    <property type="nucleotide sequence ID" value="NC_001732.1"/>
</dbReference>
<dbReference type="PaxDb" id="243232-MJ_ECL37"/>
<dbReference type="EnsemblBacteria" id="AAC37106">
    <property type="protein sequence ID" value="AAC37106"/>
    <property type="gene ID" value="MJ_ECL37"/>
</dbReference>
<dbReference type="GeneID" id="1450819"/>
<dbReference type="KEGG" id="mja:MJ_ECL37"/>
<dbReference type="eggNOG" id="arCOG07630">
    <property type="taxonomic scope" value="Archaea"/>
</dbReference>
<dbReference type="HOGENOM" id="CLU_1168578_0_0_2"/>
<dbReference type="InParanoid" id="Q60292"/>
<dbReference type="OrthoDB" id="66655at2157"/>
<dbReference type="Proteomes" id="UP000000805">
    <property type="component" value="Plasmid pDSM2661_1"/>
</dbReference>
<geneLocation type="plasmid">
    <name>large ECE</name>
</geneLocation>
<keyword id="KW-0614">Plasmid</keyword>
<keyword id="KW-1185">Reference proteome</keyword>
<accession>Q60292</accession>